<proteinExistence type="inferred from homology"/>
<reference key="1">
    <citation type="journal article" date="2008" name="Mol. Phylogenet. Evol.">
        <title>Complete plastid genome sequence of the chickpea (Cicer arietinum) and the phylogenetic distribution of rps12 and clpP intron losses among legumes (Leguminosae).</title>
        <authorList>
            <person name="Jansen R.K."/>
            <person name="Wojciechowski M.F."/>
            <person name="Sanniyasi E."/>
            <person name="Lee S.-B."/>
            <person name="Daniell H."/>
        </authorList>
    </citation>
    <scope>NUCLEOTIDE SEQUENCE</scope>
</reference>
<reference key="2">
    <citation type="submission" date="2008-06" db="EMBL/GenBank/DDBJ databases">
        <authorList>
            <person name="Jansen R.K."/>
            <person name="Wojciechowski M.F."/>
            <person name="Sanniyasi E."/>
            <person name="Lee S.-B."/>
            <person name="Daniell H."/>
        </authorList>
    </citation>
    <scope>NUCLEOTIDE SEQUENCE</scope>
</reference>
<sequence>MAKKSLIEREKKRQKLEQKYHLIRRSPKKQISKAQSLSEKWELHGKLQSLPRNSAPTRLRRRCFSTGRPRGNCRDFGLSGHILREMVHEGLLPGATRSSW</sequence>
<gene>
    <name evidence="1" type="primary">rps14</name>
</gene>
<dbReference type="EMBL" id="EU835853">
    <property type="protein sequence ID" value="ACH41064.1"/>
    <property type="molecule type" value="Genomic_DNA"/>
</dbReference>
<dbReference type="RefSeq" id="YP_002149727.1">
    <property type="nucleotide sequence ID" value="NC_011163.1"/>
</dbReference>
<dbReference type="SMR" id="B5LML8"/>
<dbReference type="GeneID" id="6797467"/>
<dbReference type="KEGG" id="cam:6797467"/>
<dbReference type="OrthoDB" id="413436at2759"/>
<dbReference type="Proteomes" id="UP000087171">
    <property type="component" value="Chloroplast Pltd"/>
</dbReference>
<dbReference type="GO" id="GO:0009507">
    <property type="term" value="C:chloroplast"/>
    <property type="evidence" value="ECO:0007669"/>
    <property type="project" value="UniProtKB-SubCell"/>
</dbReference>
<dbReference type="GO" id="GO:0015935">
    <property type="term" value="C:small ribosomal subunit"/>
    <property type="evidence" value="ECO:0007669"/>
    <property type="project" value="TreeGrafter"/>
</dbReference>
<dbReference type="GO" id="GO:0019843">
    <property type="term" value="F:rRNA binding"/>
    <property type="evidence" value="ECO:0007669"/>
    <property type="project" value="UniProtKB-UniRule"/>
</dbReference>
<dbReference type="GO" id="GO:0003735">
    <property type="term" value="F:structural constituent of ribosome"/>
    <property type="evidence" value="ECO:0007669"/>
    <property type="project" value="InterPro"/>
</dbReference>
<dbReference type="GO" id="GO:0006412">
    <property type="term" value="P:translation"/>
    <property type="evidence" value="ECO:0007669"/>
    <property type="project" value="UniProtKB-UniRule"/>
</dbReference>
<dbReference type="FunFam" id="1.10.287.1480:FF:000001">
    <property type="entry name" value="30S ribosomal protein S14"/>
    <property type="match status" value="1"/>
</dbReference>
<dbReference type="Gene3D" id="1.10.287.1480">
    <property type="match status" value="1"/>
</dbReference>
<dbReference type="HAMAP" id="MF_00537">
    <property type="entry name" value="Ribosomal_uS14_1"/>
    <property type="match status" value="1"/>
</dbReference>
<dbReference type="InterPro" id="IPR001209">
    <property type="entry name" value="Ribosomal_uS14"/>
</dbReference>
<dbReference type="InterPro" id="IPR023036">
    <property type="entry name" value="Ribosomal_uS14_bac/plastid"/>
</dbReference>
<dbReference type="InterPro" id="IPR018271">
    <property type="entry name" value="Ribosomal_uS14_CS"/>
</dbReference>
<dbReference type="NCBIfam" id="NF006477">
    <property type="entry name" value="PRK08881.1"/>
    <property type="match status" value="1"/>
</dbReference>
<dbReference type="PANTHER" id="PTHR19836">
    <property type="entry name" value="30S RIBOSOMAL PROTEIN S14"/>
    <property type="match status" value="1"/>
</dbReference>
<dbReference type="PANTHER" id="PTHR19836:SF19">
    <property type="entry name" value="SMALL RIBOSOMAL SUBUNIT PROTEIN US14M"/>
    <property type="match status" value="1"/>
</dbReference>
<dbReference type="Pfam" id="PF00253">
    <property type="entry name" value="Ribosomal_S14"/>
    <property type="match status" value="1"/>
</dbReference>
<dbReference type="SUPFAM" id="SSF57716">
    <property type="entry name" value="Glucocorticoid receptor-like (DNA-binding domain)"/>
    <property type="match status" value="1"/>
</dbReference>
<dbReference type="PROSITE" id="PS00527">
    <property type="entry name" value="RIBOSOMAL_S14"/>
    <property type="match status" value="1"/>
</dbReference>
<evidence type="ECO:0000255" key="1">
    <source>
        <dbReference type="HAMAP-Rule" id="MF_00537"/>
    </source>
</evidence>
<evidence type="ECO:0000305" key="2"/>
<accession>B5LML8</accession>
<comment type="function">
    <text evidence="1">Binds 16S rRNA, required for the assembly of 30S particles.</text>
</comment>
<comment type="subunit">
    <text evidence="1">Part of the 30S ribosomal subunit.</text>
</comment>
<comment type="subcellular location">
    <subcellularLocation>
        <location>Plastid</location>
        <location>Chloroplast</location>
    </subcellularLocation>
</comment>
<comment type="similarity">
    <text evidence="1">Belongs to the universal ribosomal protein uS14 family.</text>
</comment>
<protein>
    <recommendedName>
        <fullName evidence="1">Small ribosomal subunit protein uS14c</fullName>
    </recommendedName>
    <alternativeName>
        <fullName evidence="2">30S ribosomal protein S14, chloroplastic</fullName>
    </alternativeName>
</protein>
<feature type="chain" id="PRO_0000354408" description="Small ribosomal subunit protein uS14c">
    <location>
        <begin position="1"/>
        <end position="100"/>
    </location>
</feature>
<keyword id="KW-0150">Chloroplast</keyword>
<keyword id="KW-0934">Plastid</keyword>
<keyword id="KW-1185">Reference proteome</keyword>
<keyword id="KW-0687">Ribonucleoprotein</keyword>
<keyword id="KW-0689">Ribosomal protein</keyword>
<keyword id="KW-0694">RNA-binding</keyword>
<keyword id="KW-0699">rRNA-binding</keyword>
<organism>
    <name type="scientific">Cicer arietinum</name>
    <name type="common">Chickpea</name>
    <name type="synonym">Garbanzo</name>
    <dbReference type="NCBI Taxonomy" id="3827"/>
    <lineage>
        <taxon>Eukaryota</taxon>
        <taxon>Viridiplantae</taxon>
        <taxon>Streptophyta</taxon>
        <taxon>Embryophyta</taxon>
        <taxon>Tracheophyta</taxon>
        <taxon>Spermatophyta</taxon>
        <taxon>Magnoliopsida</taxon>
        <taxon>eudicotyledons</taxon>
        <taxon>Gunneridae</taxon>
        <taxon>Pentapetalae</taxon>
        <taxon>rosids</taxon>
        <taxon>fabids</taxon>
        <taxon>Fabales</taxon>
        <taxon>Fabaceae</taxon>
        <taxon>Papilionoideae</taxon>
        <taxon>50 kb inversion clade</taxon>
        <taxon>NPAAA clade</taxon>
        <taxon>Hologalegina</taxon>
        <taxon>IRL clade</taxon>
        <taxon>Cicereae</taxon>
        <taxon>Cicer</taxon>
    </lineage>
</organism>
<geneLocation type="chloroplast"/>
<name>RR14_CICAR</name>